<organism>
    <name type="scientific">Mus musculus</name>
    <name type="common">Mouse</name>
    <dbReference type="NCBI Taxonomy" id="10090"/>
    <lineage>
        <taxon>Eukaryota</taxon>
        <taxon>Metazoa</taxon>
        <taxon>Chordata</taxon>
        <taxon>Craniata</taxon>
        <taxon>Vertebrata</taxon>
        <taxon>Euteleostomi</taxon>
        <taxon>Mammalia</taxon>
        <taxon>Eutheria</taxon>
        <taxon>Euarchontoglires</taxon>
        <taxon>Glires</taxon>
        <taxon>Rodentia</taxon>
        <taxon>Myomorpha</taxon>
        <taxon>Muroidea</taxon>
        <taxon>Muridae</taxon>
        <taxon>Murinae</taxon>
        <taxon>Mus</taxon>
        <taxon>Mus</taxon>
    </lineage>
</organism>
<feature type="signal peptide" evidence="3">
    <location>
        <begin position="1"/>
        <end position="18"/>
    </location>
</feature>
<feature type="chain" id="PRO_0000012890" description="Adhesion G protein-coupled receptor G3">
    <location>
        <begin position="19"/>
        <end position="542"/>
    </location>
</feature>
<feature type="chain" id="PRO_0000462381" description="Adhesion G-protein coupled receptor G3, N-terminal fragment" evidence="11">
    <location>
        <begin position="19"/>
        <end position="244"/>
    </location>
</feature>
<feature type="chain" id="PRO_0000462382" description="Adhesion G-protein coupled receptor G3, C-terminal fragment" evidence="11">
    <location>
        <begin position="245"/>
        <end position="542"/>
    </location>
</feature>
<feature type="topological domain" description="Extracellular" evidence="11">
    <location>
        <begin position="19"/>
        <end position="267"/>
    </location>
</feature>
<feature type="transmembrane region" description="Helical; Name=1" evidence="3">
    <location>
        <begin position="268"/>
        <end position="288"/>
    </location>
</feature>
<feature type="topological domain" description="Cytoplasmic" evidence="11">
    <location>
        <begin position="289"/>
        <end position="302"/>
    </location>
</feature>
<feature type="transmembrane region" description="Helical; Name=2" evidence="3">
    <location>
        <begin position="303"/>
        <end position="323"/>
    </location>
</feature>
<feature type="topological domain" description="Extracellular" evidence="11">
    <location>
        <begin position="324"/>
        <end position="342"/>
    </location>
</feature>
<feature type="transmembrane region" description="Helical; Name=3" evidence="3">
    <location>
        <begin position="343"/>
        <end position="363"/>
    </location>
</feature>
<feature type="topological domain" description="Cytoplasmic" evidence="11">
    <location>
        <begin position="364"/>
        <end position="372"/>
    </location>
</feature>
<feature type="transmembrane region" description="Helical; Name=4" evidence="3">
    <location>
        <begin position="373"/>
        <end position="393"/>
    </location>
</feature>
<feature type="topological domain" description="Extracellular" evidence="11">
    <location>
        <begin position="394"/>
        <end position="426"/>
    </location>
</feature>
<feature type="transmembrane region" description="Helical; Name=5" evidence="3">
    <location>
        <begin position="427"/>
        <end position="447"/>
    </location>
</feature>
<feature type="topological domain" description="Cytoplasmic" evidence="11">
    <location>
        <begin position="448"/>
        <end position="467"/>
    </location>
</feature>
<feature type="transmembrane region" description="Helical; Name=6" evidence="3">
    <location>
        <begin position="468"/>
        <end position="488"/>
    </location>
</feature>
<feature type="topological domain" description="Extracellular" evidence="11">
    <location>
        <begin position="489"/>
        <end position="494"/>
    </location>
</feature>
<feature type="transmembrane region" description="Helical; Name=7" evidence="3">
    <location>
        <begin position="495"/>
        <end position="515"/>
    </location>
</feature>
<feature type="topological domain" description="Cytoplasmic" evidence="11">
    <location>
        <begin position="516"/>
        <end position="542"/>
    </location>
</feature>
<feature type="domain" description="GAIN-B" evidence="4">
    <location>
        <begin position="107"/>
        <end position="257"/>
    </location>
</feature>
<feature type="region of interest" description="GPS" evidence="4">
    <location>
        <begin position="213"/>
        <end position="257"/>
    </location>
</feature>
<feature type="region of interest" description="Stachel" evidence="1">
    <location>
        <begin position="246"/>
        <end position="254"/>
    </location>
</feature>
<feature type="binding site" evidence="2">
    <location>
        <position position="502"/>
    </location>
    <ligand>
        <name>cortisol</name>
        <dbReference type="ChEBI" id="CHEBI:17650"/>
    </ligand>
</feature>
<feature type="site" description="Cleavage; by autolysis" evidence="4">
    <location>
        <begin position="244"/>
        <end position="245"/>
    </location>
</feature>
<feature type="glycosylation site" description="N-linked (GlcNAc...) asparagine" evidence="3">
    <location>
        <position position="44"/>
    </location>
</feature>
<feature type="glycosylation site" description="N-linked (GlcNAc...) asparagine" evidence="3">
    <location>
        <position position="96"/>
    </location>
</feature>
<feature type="glycosylation site" description="N-linked (GlcNAc...) asparagine" evidence="3">
    <location>
        <position position="142"/>
    </location>
</feature>
<feature type="glycosylation site" description="N-linked (GlcNAc...) asparagine" evidence="3">
    <location>
        <position position="408"/>
    </location>
</feature>
<feature type="disulfide bond" evidence="4">
    <location>
        <begin position="213"/>
        <end position="239"/>
    </location>
</feature>
<feature type="disulfide bond" evidence="4">
    <location>
        <begin position="228"/>
        <end position="241"/>
    </location>
</feature>
<feature type="disulfide bond" evidence="2">
    <location>
        <begin position="333"/>
        <end position="415"/>
    </location>
</feature>
<feature type="sequence conflict" description="In Ref. 2; AAH64726." evidence="11" ref="2">
    <original>F</original>
    <variation>L</variation>
    <location>
        <position position="295"/>
    </location>
</feature>
<name>AGRG3_MOUSE</name>
<reference key="1">
    <citation type="journal article" date="2005" name="Science">
        <title>The transcriptional landscape of the mammalian genome.</title>
        <authorList>
            <person name="Carninci P."/>
            <person name="Kasukawa T."/>
            <person name="Katayama S."/>
            <person name="Gough J."/>
            <person name="Frith M.C."/>
            <person name="Maeda N."/>
            <person name="Oyama R."/>
            <person name="Ravasi T."/>
            <person name="Lenhard B."/>
            <person name="Wells C."/>
            <person name="Kodzius R."/>
            <person name="Shimokawa K."/>
            <person name="Bajic V.B."/>
            <person name="Brenner S.E."/>
            <person name="Batalov S."/>
            <person name="Forrest A.R."/>
            <person name="Zavolan M."/>
            <person name="Davis M.J."/>
            <person name="Wilming L.G."/>
            <person name="Aidinis V."/>
            <person name="Allen J.E."/>
            <person name="Ambesi-Impiombato A."/>
            <person name="Apweiler R."/>
            <person name="Aturaliya R.N."/>
            <person name="Bailey T.L."/>
            <person name="Bansal M."/>
            <person name="Baxter L."/>
            <person name="Beisel K.W."/>
            <person name="Bersano T."/>
            <person name="Bono H."/>
            <person name="Chalk A.M."/>
            <person name="Chiu K.P."/>
            <person name="Choudhary V."/>
            <person name="Christoffels A."/>
            <person name="Clutterbuck D.R."/>
            <person name="Crowe M.L."/>
            <person name="Dalla E."/>
            <person name="Dalrymple B.P."/>
            <person name="de Bono B."/>
            <person name="Della Gatta G."/>
            <person name="di Bernardo D."/>
            <person name="Down T."/>
            <person name="Engstrom P."/>
            <person name="Fagiolini M."/>
            <person name="Faulkner G."/>
            <person name="Fletcher C.F."/>
            <person name="Fukushima T."/>
            <person name="Furuno M."/>
            <person name="Futaki S."/>
            <person name="Gariboldi M."/>
            <person name="Georgii-Hemming P."/>
            <person name="Gingeras T.R."/>
            <person name="Gojobori T."/>
            <person name="Green R.E."/>
            <person name="Gustincich S."/>
            <person name="Harbers M."/>
            <person name="Hayashi Y."/>
            <person name="Hensch T.K."/>
            <person name="Hirokawa N."/>
            <person name="Hill D."/>
            <person name="Huminiecki L."/>
            <person name="Iacono M."/>
            <person name="Ikeo K."/>
            <person name="Iwama A."/>
            <person name="Ishikawa T."/>
            <person name="Jakt M."/>
            <person name="Kanapin A."/>
            <person name="Katoh M."/>
            <person name="Kawasawa Y."/>
            <person name="Kelso J."/>
            <person name="Kitamura H."/>
            <person name="Kitano H."/>
            <person name="Kollias G."/>
            <person name="Krishnan S.P."/>
            <person name="Kruger A."/>
            <person name="Kummerfeld S.K."/>
            <person name="Kurochkin I.V."/>
            <person name="Lareau L.F."/>
            <person name="Lazarevic D."/>
            <person name="Lipovich L."/>
            <person name="Liu J."/>
            <person name="Liuni S."/>
            <person name="McWilliam S."/>
            <person name="Madan Babu M."/>
            <person name="Madera M."/>
            <person name="Marchionni L."/>
            <person name="Matsuda H."/>
            <person name="Matsuzawa S."/>
            <person name="Miki H."/>
            <person name="Mignone F."/>
            <person name="Miyake S."/>
            <person name="Morris K."/>
            <person name="Mottagui-Tabar S."/>
            <person name="Mulder N."/>
            <person name="Nakano N."/>
            <person name="Nakauchi H."/>
            <person name="Ng P."/>
            <person name="Nilsson R."/>
            <person name="Nishiguchi S."/>
            <person name="Nishikawa S."/>
            <person name="Nori F."/>
            <person name="Ohara O."/>
            <person name="Okazaki Y."/>
            <person name="Orlando V."/>
            <person name="Pang K.C."/>
            <person name="Pavan W.J."/>
            <person name="Pavesi G."/>
            <person name="Pesole G."/>
            <person name="Petrovsky N."/>
            <person name="Piazza S."/>
            <person name="Reed J."/>
            <person name="Reid J.F."/>
            <person name="Ring B.Z."/>
            <person name="Ringwald M."/>
            <person name="Rost B."/>
            <person name="Ruan Y."/>
            <person name="Salzberg S.L."/>
            <person name="Sandelin A."/>
            <person name="Schneider C."/>
            <person name="Schoenbach C."/>
            <person name="Sekiguchi K."/>
            <person name="Semple C.A."/>
            <person name="Seno S."/>
            <person name="Sessa L."/>
            <person name="Sheng Y."/>
            <person name="Shibata Y."/>
            <person name="Shimada H."/>
            <person name="Shimada K."/>
            <person name="Silva D."/>
            <person name="Sinclair B."/>
            <person name="Sperling S."/>
            <person name="Stupka E."/>
            <person name="Sugiura K."/>
            <person name="Sultana R."/>
            <person name="Takenaka Y."/>
            <person name="Taki K."/>
            <person name="Tammoja K."/>
            <person name="Tan S.L."/>
            <person name="Tang S."/>
            <person name="Taylor M.S."/>
            <person name="Tegner J."/>
            <person name="Teichmann S.A."/>
            <person name="Ueda H.R."/>
            <person name="van Nimwegen E."/>
            <person name="Verardo R."/>
            <person name="Wei C.L."/>
            <person name="Yagi K."/>
            <person name="Yamanishi H."/>
            <person name="Zabarovsky E."/>
            <person name="Zhu S."/>
            <person name="Zimmer A."/>
            <person name="Hide W."/>
            <person name="Bult C."/>
            <person name="Grimmond S.M."/>
            <person name="Teasdale R.D."/>
            <person name="Liu E.T."/>
            <person name="Brusic V."/>
            <person name="Quackenbush J."/>
            <person name="Wahlestedt C."/>
            <person name="Mattick J.S."/>
            <person name="Hume D.A."/>
            <person name="Kai C."/>
            <person name="Sasaki D."/>
            <person name="Tomaru Y."/>
            <person name="Fukuda S."/>
            <person name="Kanamori-Katayama M."/>
            <person name="Suzuki M."/>
            <person name="Aoki J."/>
            <person name="Arakawa T."/>
            <person name="Iida J."/>
            <person name="Imamura K."/>
            <person name="Itoh M."/>
            <person name="Kato T."/>
            <person name="Kawaji H."/>
            <person name="Kawagashira N."/>
            <person name="Kawashima T."/>
            <person name="Kojima M."/>
            <person name="Kondo S."/>
            <person name="Konno H."/>
            <person name="Nakano K."/>
            <person name="Ninomiya N."/>
            <person name="Nishio T."/>
            <person name="Okada M."/>
            <person name="Plessy C."/>
            <person name="Shibata K."/>
            <person name="Shiraki T."/>
            <person name="Suzuki S."/>
            <person name="Tagami M."/>
            <person name="Waki K."/>
            <person name="Watahiki A."/>
            <person name="Okamura-Oho Y."/>
            <person name="Suzuki H."/>
            <person name="Kawai J."/>
            <person name="Hayashizaki Y."/>
        </authorList>
    </citation>
    <scope>NUCLEOTIDE SEQUENCE [LARGE SCALE MRNA]</scope>
    <source>
        <strain>NOD</strain>
    </source>
</reference>
<reference key="2">
    <citation type="journal article" date="2004" name="Genome Res.">
        <title>The status, quality, and expansion of the NIH full-length cDNA project: the Mammalian Gene Collection (MGC).</title>
        <authorList>
            <consortium name="The MGC Project Team"/>
        </authorList>
    </citation>
    <scope>NUCLEOTIDE SEQUENCE [LARGE SCALE MRNA]</scope>
    <source>
        <strain>C57BL/6J</strain>
        <tissue>Embryo</tissue>
        <tissue>Kidney</tissue>
    </source>
</reference>
<reference key="3">
    <citation type="journal article" date="2013" name="Cell Differ.">
        <title>Gpr97 is essential for the follicular versus marginal zone B-lymphocyte fate decision.</title>
        <authorList>
            <person name="Wang J.J."/>
            <person name="Zhang L.L."/>
            <person name="Zhang H.X."/>
            <person name="Shen C.L."/>
            <person name="Lu S.Y."/>
            <person name="Kuang Y."/>
            <person name="Wan Y.H."/>
            <person name="Wang W.G."/>
            <person name="Yan H.M."/>
            <person name="Dang S.Y."/>
            <person name="Fei J."/>
            <person name="Jin X.L."/>
            <person name="Wang Z.G."/>
        </authorList>
    </citation>
    <scope>DISRUPTION PHENOTYPE</scope>
    <scope>FUNCTION</scope>
</reference>
<reference key="4">
    <citation type="journal article" date="2013" name="J. Biol. Chem.">
        <title>The orphan adhesion G protein-coupled receptor GPR97 regulates migration of lymphatic endothelial cells via the small GTPases RhoA and Cdc42.</title>
        <authorList>
            <person name="Valtcheva N."/>
            <person name="Primorac A."/>
            <person name="Jurisic G."/>
            <person name="Hollmen M."/>
            <person name="Detmar M."/>
        </authorList>
    </citation>
    <scope>FUNCTION</scope>
    <scope>TISSUE SPECIFICITY</scope>
</reference>
<reference key="5">
    <citation type="journal article" date="2016" name="Sci. Rep.">
        <title>Gpr97 is dispensable for metabolic syndrome but is involved in macrophage inflammation in high-fat diet-induced obesity in mice.</title>
        <authorList>
            <person name="Shi J."/>
            <person name="Zhang X."/>
            <person name="Wang S."/>
            <person name="Wang J."/>
            <person name="Du B."/>
            <person name="Wang Z."/>
            <person name="Liu M."/>
            <person name="Jiang W."/>
            <person name="Qian M."/>
            <person name="Ren H."/>
        </authorList>
    </citation>
    <scope>FUNCTION</scope>
    <scope>DISRUPTION PHENOTYPE</scope>
</reference>
<reference key="6">
    <citation type="journal article" date="2018" name="J. Am. Soc. Nephrol.">
        <title>Gpr97 Exacerbates AKI by Mediating Sema3A Signaling.</title>
        <authorList>
            <person name="Fang W."/>
            <person name="Wang Z."/>
            <person name="Li Q."/>
            <person name="Wang X."/>
            <person name="Zhang Y."/>
            <person name="Sun Y."/>
            <person name="Tang W."/>
            <person name="Ma C."/>
            <person name="Sun J."/>
            <person name="Li N."/>
            <person name="Yi F."/>
        </authorList>
    </citation>
    <scope>DISRUPTION PHENOTYPE</scope>
    <scope>TISSUE SPECIFICITY</scope>
</reference>
<reference key="7">
    <citation type="journal article" date="2024" name="FASEB J.">
        <title>GPR97 deficiency suppresses Wnt/beta-catenin signaling in hypertensive nephropathy.</title>
        <authorList>
            <person name="Gao P."/>
            <person name="Zhu J."/>
            <person name="Xiangyun G."/>
            <person name="Li J."/>
            <person name="Wu J."/>
        </authorList>
    </citation>
    <scope>FUNCTION</scope>
    <scope>DISRUPTION PHENOTYPE</scope>
</reference>
<gene>
    <name evidence="12" type="primary">Adgrg3</name>
    <name evidence="10" type="synonym">Gpr97</name>
</gene>
<dbReference type="EMBL" id="AK155164">
    <property type="protein sequence ID" value="BAE33087.1"/>
    <property type="molecule type" value="mRNA"/>
</dbReference>
<dbReference type="EMBL" id="BC026426">
    <property type="protein sequence ID" value="AAH26426.1"/>
    <property type="molecule type" value="mRNA"/>
</dbReference>
<dbReference type="EMBL" id="BC064726">
    <property type="protein sequence ID" value="AAH64726.1"/>
    <property type="molecule type" value="mRNA"/>
</dbReference>
<dbReference type="CCDS" id="CCDS22554.1"/>
<dbReference type="RefSeq" id="NP_766624.3">
    <property type="nucleotide sequence ID" value="NM_173036.3"/>
</dbReference>
<dbReference type="SMR" id="Q8R0T6"/>
<dbReference type="FunCoup" id="Q8R0T6">
    <property type="interactions" value="696"/>
</dbReference>
<dbReference type="IntAct" id="Q8R0T6">
    <property type="interactions" value="1"/>
</dbReference>
<dbReference type="STRING" id="10090.ENSMUSP00000051079"/>
<dbReference type="MEROPS" id="P02.024"/>
<dbReference type="GlyCosmos" id="Q8R0T6">
    <property type="glycosylation" value="4 sites, No reported glycans"/>
</dbReference>
<dbReference type="GlyGen" id="Q8R0T6">
    <property type="glycosylation" value="4 sites"/>
</dbReference>
<dbReference type="iPTMnet" id="Q8R0T6"/>
<dbReference type="PhosphoSitePlus" id="Q8R0T6"/>
<dbReference type="jPOST" id="Q8R0T6"/>
<dbReference type="PaxDb" id="10090-ENSMUSP00000051079"/>
<dbReference type="ProteomicsDB" id="285773"/>
<dbReference type="Antibodypedia" id="15147">
    <property type="antibodies" value="147 antibodies from 27 providers"/>
</dbReference>
<dbReference type="DNASU" id="54672"/>
<dbReference type="Ensembl" id="ENSMUST00000051259.10">
    <property type="protein sequence ID" value="ENSMUSP00000051079.9"/>
    <property type="gene ID" value="ENSMUSG00000060470.8"/>
</dbReference>
<dbReference type="GeneID" id="54672"/>
<dbReference type="KEGG" id="mmu:54672"/>
<dbReference type="UCSC" id="uc009mxp.2">
    <property type="organism name" value="mouse"/>
</dbReference>
<dbReference type="AGR" id="MGI:1859670"/>
<dbReference type="CTD" id="222487"/>
<dbReference type="MGI" id="MGI:1859670">
    <property type="gene designation" value="Adgrg3"/>
</dbReference>
<dbReference type="VEuPathDB" id="HostDB:ENSMUSG00000060470"/>
<dbReference type="eggNOG" id="KOG4193">
    <property type="taxonomic scope" value="Eukaryota"/>
</dbReference>
<dbReference type="GeneTree" id="ENSGT00940000154285"/>
<dbReference type="HOGENOM" id="CLU_002753_3_9_1"/>
<dbReference type="InParanoid" id="Q8R0T6"/>
<dbReference type="OMA" id="TLFKGPQ"/>
<dbReference type="OrthoDB" id="6134459at2759"/>
<dbReference type="PhylomeDB" id="Q8R0T6"/>
<dbReference type="TreeFam" id="TF321769"/>
<dbReference type="Reactome" id="R-MMU-6798695">
    <property type="pathway name" value="Neutrophil degranulation"/>
</dbReference>
<dbReference type="BioGRID-ORCS" id="54672">
    <property type="hits" value="4 hits in 77 CRISPR screens"/>
</dbReference>
<dbReference type="ChiTaRS" id="Adgrg3">
    <property type="organism name" value="mouse"/>
</dbReference>
<dbReference type="PRO" id="PR:Q8R0T6"/>
<dbReference type="Proteomes" id="UP000000589">
    <property type="component" value="Chromosome 8"/>
</dbReference>
<dbReference type="RNAct" id="Q8R0T6">
    <property type="molecule type" value="protein"/>
</dbReference>
<dbReference type="Bgee" id="ENSMUSG00000060470">
    <property type="expression patterns" value="Expressed in granulocyte and 80 other cell types or tissues"/>
</dbReference>
<dbReference type="ExpressionAtlas" id="Q8R0T6">
    <property type="expression patterns" value="baseline and differential"/>
</dbReference>
<dbReference type="GO" id="GO:0005886">
    <property type="term" value="C:plasma membrane"/>
    <property type="evidence" value="ECO:0000250"/>
    <property type="project" value="UniProtKB"/>
</dbReference>
<dbReference type="GO" id="GO:0004930">
    <property type="term" value="F:G protein-coupled receptor activity"/>
    <property type="evidence" value="ECO:0007669"/>
    <property type="project" value="UniProtKB-KW"/>
</dbReference>
<dbReference type="GO" id="GO:0030183">
    <property type="term" value="P:B cell differentiation"/>
    <property type="evidence" value="ECO:0000315"/>
    <property type="project" value="UniProtKB"/>
</dbReference>
<dbReference type="GO" id="GO:0007166">
    <property type="term" value="P:cell surface receptor signaling pathway"/>
    <property type="evidence" value="ECO:0007669"/>
    <property type="project" value="InterPro"/>
</dbReference>
<dbReference type="GO" id="GO:0007186">
    <property type="term" value="P:G protein-coupled receptor signaling pathway"/>
    <property type="evidence" value="ECO:0000250"/>
    <property type="project" value="UniProtKB"/>
</dbReference>
<dbReference type="GO" id="GO:0032792">
    <property type="term" value="P:negative regulation of CREB transcription factor activity"/>
    <property type="evidence" value="ECO:0000315"/>
    <property type="project" value="UniProtKB"/>
</dbReference>
<dbReference type="GO" id="GO:1901223">
    <property type="term" value="P:negative regulation of non-canonical NF-kappaB signal transduction"/>
    <property type="evidence" value="ECO:0000315"/>
    <property type="project" value="UniProtKB"/>
</dbReference>
<dbReference type="GO" id="GO:0030334">
    <property type="term" value="P:regulation of cell migration"/>
    <property type="evidence" value="ECO:0000250"/>
    <property type="project" value="UniProtKB"/>
</dbReference>
<dbReference type="FunFam" id="1.20.1070.10:FF:000222">
    <property type="entry name" value="Adhesion G protein-coupled receptor G3"/>
    <property type="match status" value="1"/>
</dbReference>
<dbReference type="FunFam" id="2.60.220.50:FF:000023">
    <property type="entry name" value="Adhesion G protein-coupled receptor G3"/>
    <property type="match status" value="1"/>
</dbReference>
<dbReference type="Gene3D" id="2.60.220.50">
    <property type="match status" value="1"/>
</dbReference>
<dbReference type="Gene3D" id="1.20.1070.10">
    <property type="entry name" value="Rhodopsin 7-helix transmembrane proteins"/>
    <property type="match status" value="1"/>
</dbReference>
<dbReference type="InterPro" id="IPR057244">
    <property type="entry name" value="GAIN_B"/>
</dbReference>
<dbReference type="InterPro" id="IPR046338">
    <property type="entry name" value="GAIN_dom_sf"/>
</dbReference>
<dbReference type="InterPro" id="IPR017981">
    <property type="entry name" value="GPCR_2-like_7TM"/>
</dbReference>
<dbReference type="InterPro" id="IPR000832">
    <property type="entry name" value="GPCR_2_secretin-like"/>
</dbReference>
<dbReference type="InterPro" id="IPR003910">
    <property type="entry name" value="GPR1/GPR3/GPR5"/>
</dbReference>
<dbReference type="InterPro" id="IPR000203">
    <property type="entry name" value="GPS"/>
</dbReference>
<dbReference type="PANTHER" id="PTHR12011:SF285">
    <property type="entry name" value="ADHESION G PROTEIN-COUPLED RECEPTOR G3"/>
    <property type="match status" value="1"/>
</dbReference>
<dbReference type="PANTHER" id="PTHR12011">
    <property type="entry name" value="ADHESION G-PROTEIN COUPLED RECEPTOR"/>
    <property type="match status" value="1"/>
</dbReference>
<dbReference type="Pfam" id="PF00002">
    <property type="entry name" value="7tm_2"/>
    <property type="match status" value="1"/>
</dbReference>
<dbReference type="Pfam" id="PF01825">
    <property type="entry name" value="GPS"/>
    <property type="match status" value="1"/>
</dbReference>
<dbReference type="PRINTS" id="PR00249">
    <property type="entry name" value="GPCRSECRETIN"/>
</dbReference>
<dbReference type="PRINTS" id="PR01422">
    <property type="entry name" value="GPR56ORPHANR"/>
</dbReference>
<dbReference type="SMART" id="SM00303">
    <property type="entry name" value="GPS"/>
    <property type="match status" value="1"/>
</dbReference>
<dbReference type="PROSITE" id="PS50261">
    <property type="entry name" value="G_PROTEIN_RECEP_F2_4"/>
    <property type="match status" value="1"/>
</dbReference>
<dbReference type="PROSITE" id="PS50221">
    <property type="entry name" value="GAIN_B"/>
    <property type="match status" value="1"/>
</dbReference>
<protein>
    <recommendedName>
        <fullName evidence="11">Adhesion G protein-coupled receptor G3</fullName>
    </recommendedName>
    <alternativeName>
        <fullName evidence="10">G-protein coupled receptor 97</fullName>
    </alternativeName>
    <component>
        <recommendedName>
            <fullName evidence="11">Adhesion G-protein coupled receptor G3, N-terminal fragment</fullName>
            <shortName evidence="11">ADGRG3 N-terminal fragment</shortName>
        </recommendedName>
    </component>
    <component>
        <recommendedName>
            <fullName evidence="11">Adhesion G-protein coupled receptor G3, C-terminal fragment</fullName>
            <shortName evidence="11">ADGRG3 C-terminal fragment</shortName>
        </recommendedName>
    </component>
</protein>
<evidence type="ECO:0000250" key="1">
    <source>
        <dbReference type="UniProtKB" id="Q6QNK2"/>
    </source>
</evidence>
<evidence type="ECO:0000250" key="2">
    <source>
        <dbReference type="UniProtKB" id="Q86Y34"/>
    </source>
</evidence>
<evidence type="ECO:0000255" key="3"/>
<evidence type="ECO:0000255" key="4">
    <source>
        <dbReference type="PROSITE-ProRule" id="PRU00098"/>
    </source>
</evidence>
<evidence type="ECO:0000269" key="5">
    <source>
    </source>
</evidence>
<evidence type="ECO:0000269" key="6">
    <source>
    </source>
</evidence>
<evidence type="ECO:0000269" key="7">
    <source>
    </source>
</evidence>
<evidence type="ECO:0000269" key="8">
    <source>
    </source>
</evidence>
<evidence type="ECO:0000269" key="9">
    <source>
    </source>
</evidence>
<evidence type="ECO:0000303" key="10">
    <source>
    </source>
</evidence>
<evidence type="ECO:0000305" key="11"/>
<evidence type="ECO:0000312" key="12">
    <source>
        <dbReference type="MGI" id="MGI:1859670"/>
    </source>
</evidence>
<proteinExistence type="evidence at transcript level"/>
<sequence length="542" mass="60072">MATARSLGLLFFLLLTSDEETTEEPRNVCRRLQEGHEYDTFDLNDTAQCFTKCGQSEHSPCDVGNLQRYWLNYESYLLENSMETVDMPFVKALIQNISTDVSEDLLYSLMLSQIPRQVMQGEDEPADGVRLPKSLFGALPGNRSAVRLAITVLDIGAGNVFKGPKLLEDKGSSVLNNRMVGLSVGQMHATGLSEPVEITFSHERQPPNVILTCVFWDMAKGDWDSHGCSTVPGDGRTVCRCDHLTFFALLLRPILDLATAQTLTRISQAGSAVSMIFLAFTMVLYVAFRFSLQRFKSEDAPKIHMALSISLFLLNLTFLINVGSSSQGPPASCWVRAAIFHYFLLCVFTWMGLEAFHLYLLAIRVFNTYFGHYFLKLSLLAWGLPVLVVIGAGSSNSYGVYTIRDQENRTSLELCWFQKEPALYATVHGYFLVTFLFGAVVLALVAWKIFTLPSVTAGKGQGPTWKSVLTVLGLSSLVGMTWGLAVLTPLGLSTIYVFTLLNSLQGLFIFCWFIILYFPTQSTTASSSGTARLDQAHSVSQE</sequence>
<accession>Q8R0T6</accession>
<accession>Q3U2Q3</accession>
<keyword id="KW-1003">Cell membrane</keyword>
<keyword id="KW-1015">Disulfide bond</keyword>
<keyword id="KW-0297">G-protein coupled receptor</keyword>
<keyword id="KW-0325">Glycoprotein</keyword>
<keyword id="KW-0472">Membrane</keyword>
<keyword id="KW-0675">Receptor</keyword>
<keyword id="KW-1185">Reference proteome</keyword>
<keyword id="KW-0732">Signal</keyword>
<keyword id="KW-0807">Transducer</keyword>
<keyword id="KW-0812">Transmembrane</keyword>
<keyword id="KW-1133">Transmembrane helix</keyword>
<comment type="function">
    <text evidence="2 5 6 7 9">Adhesion G-protein coupled receptor (aGPCR) for glucocorticoid hormones such as cortisol, cortisone and 11-deoxycortisol (By similarity). Ligand binding causes a conformation change that triggers signaling via guanine nucleotide-binding proteins (G proteins) and modulates the activity of downstream effectors, such as adenylate cyclase (By similarity). ADGRG3/GPR97 is coupled to G(o)/GNAO1 G proteins and mediates signaling by inhibiting adenylate cyclase activity (By similarity). May also signal through G-alpha(q)-proteins; additional evidence are however required to confirm this result in vivo (By similarity). Plays a role in the regulation of various processes including B-cell development, inflammation or innate immunity (PubMed:24113187, PubMed:27089991, PubMed:38345813). Regulates migration of lymphatic endothelial cells in vitro via the small GTPases RhoA and CDC42 (PubMed:24178298). Antibody ligation leads to the production and activation of antimicrobial mediators like reactive oxygen species (ROS) and myeloperoxidase (MPO) as well as enhanced bacteria uptake and killing by granulocytes (By similarity). Additionally, collaborates with protease-activated receptor 2/PAR2 to stimulate neutrophil-driven antimicrobial responses and endothelial cell activation (By similarity).</text>
</comment>
<comment type="activity regulation">
    <text evidence="1 4">Forms a heterodimer of 2 chains generated by proteolytic processing that remain associated through non-covalent interactions mediated by the GAIN-B domain (By similarity). In the inactivated receptor, the Stachel sequence (also named stalk) is embedded in the GAIN-B domain, where it adopts a beta-strand conformation. On activation, the Stachel moves into the 7 transmembrane region and adopts a twisted hook-shaped configuration that forms contacts within the receptor, leading to coupling of a G-alpha protein, which activates signaling. The cleaved GAIN-B and N-terminal domains can then dissociate from the rest of the receptor (By similarity).</text>
</comment>
<comment type="subunit">
    <text evidence="2 4">Heterodimer of 2 chains generated by proteolytic processing; the large extracellular N-terminal fragment and the membrane-bound C-terminal fragment predominantly remain associated and non-covalently linked (By similarity). Interacts with PRTN3; this interaction induces the activation of PAR2 (By similarity). Interacts with GNAO1 (when palmitoylated) (By similarity).</text>
</comment>
<comment type="subcellular location">
    <subcellularLocation>
        <location evidence="2">Cell membrane</location>
        <topology evidence="2">Multi-pass membrane protein</topology>
    </subcellularLocation>
</comment>
<comment type="tissue specificity">
    <text evidence="6 8">Present in all these tissues with a relative high expression in the heart, kidney, and bone marrow (PubMed:29531097). Also expressed in intestinal lymphatic endothelium (PubMed:24178298).</text>
</comment>
<comment type="domain">
    <text evidence="1">The Stachel sequence (also named stalk) in the C-terminal part of the extracellular domain (ECD) functions as a tethered agonist. In the inactivated receptor, the Stachel sequence (also named stalk) is embedded in the GAIN-B domain, where it adopts a beta-strand conformation. On activation, the Stachel moves into the 7 transmembrane region and adopts a twisted hook-shaped configuration that forms contacts within the receptor, leading to coupling of a G-alpha protein, which activates signaling.</text>
</comment>
<comment type="PTM">
    <text evidence="4">Autoproteolytically processed at the GPS region of the GAIN-B domain; this cleavage modulates receptor activity.</text>
</comment>
<comment type="disruption phenotype">
    <text evidence="5 8 9">No visible phenotype (PubMed:24113187, PubMed:29531097). Mutant mice show altered follicular-versus-marginal zone B-lymphocyte fate decision in the spleen and decreased numbers of B220+ lymphocytes in the bone marrow (PubMed:24113187). Adgrg3 deficiency reduces inflammatory responses in the kidney after renal ischemia-reperfusion injury or hypertensive nephropathy (PubMed:29531097, PubMed:38345813). Adgrg3 knockout does not impact overall metabolic phenotypes in high-fat diet-fed mice, but influences immune cell activity (PubMed:29531097).</text>
</comment>
<comment type="similarity">
    <text evidence="11">Belongs to the G-protein coupled receptor 2 family. Adhesion G-protein coupled receptor (ADGR) subfamily.</text>
</comment>